<sequence>MDCPNMPLHINRRQMLLSAATAAGALALGPARDAFGQARVQITEGNVAPLPIAIPNFVAGTPSDNEVGGGVAQVITNNLKRSGLFAPIDQAAYVEKITNIDVPPQFKSWTSINAQALVTGRMTRQSDGRLKAEFRLWDVATGQQLAGQQYFTSPEYWRRIAHIISDQIYERLTGEKGYFDSRVVFIDESGPADRRVKRLALMDQDGANVRYLTRGSDLVLTPRFSPSTQEITYMEFGQGDPKVYLFNIETGQREIVGNFPGMSFAPRFSPDGQRIIMSLQQGGNSNLFVMDLRSKSTTRLTDTPAIDTSPSYSPDAARICFESDRGGKPQIYVMPASGGQAQRISFGDGSYSTPVWSPRGDYIAFTKQGGGQFAIGIMKPDGSGERILTSGFHNEGPTFAPNGRVLMFFRDPGGNAGPSLFTVDVSGRNELRVPTPGYASDPAWSPLLS</sequence>
<comment type="function">
    <text evidence="1">Part of the Tol-Pal system, which plays a role in outer membrane invagination during cell division and is important for maintaining outer membrane integrity.</text>
</comment>
<comment type="subunit">
    <text evidence="1">The Tol-Pal system is composed of five core proteins: the inner membrane proteins TolA, TolQ and TolR, the periplasmic protein TolB and the outer membrane protein Pal. They form a network linking the inner and outer membranes and the peptidoglycan layer.</text>
</comment>
<comment type="subcellular location">
    <subcellularLocation>
        <location evidence="1">Periplasm</location>
    </subcellularLocation>
</comment>
<comment type="similarity">
    <text evidence="1">Belongs to the TolB family.</text>
</comment>
<keyword id="KW-0131">Cell cycle</keyword>
<keyword id="KW-0132">Cell division</keyword>
<keyword id="KW-0574">Periplasm</keyword>
<keyword id="KW-1185">Reference proteome</keyword>
<keyword id="KW-0732">Signal</keyword>
<organism>
    <name type="scientific">Rhodopseudomonas palustris (strain HaA2)</name>
    <dbReference type="NCBI Taxonomy" id="316058"/>
    <lineage>
        <taxon>Bacteria</taxon>
        <taxon>Pseudomonadati</taxon>
        <taxon>Pseudomonadota</taxon>
        <taxon>Alphaproteobacteria</taxon>
        <taxon>Hyphomicrobiales</taxon>
        <taxon>Nitrobacteraceae</taxon>
        <taxon>Rhodopseudomonas</taxon>
    </lineage>
</organism>
<evidence type="ECO:0000255" key="1">
    <source>
        <dbReference type="HAMAP-Rule" id="MF_00671"/>
    </source>
</evidence>
<name>TOLB_RHOP2</name>
<feature type="signal peptide" evidence="1">
    <location>
        <begin position="1"/>
        <end position="36"/>
    </location>
</feature>
<feature type="chain" id="PRO_0000259081" description="Tol-Pal system protein TolB" evidence="1">
    <location>
        <begin position="37"/>
        <end position="449"/>
    </location>
</feature>
<reference key="1">
    <citation type="submission" date="2006-01" db="EMBL/GenBank/DDBJ databases">
        <title>Complete sequence of Rhodopseudomonas palustris HaA2.</title>
        <authorList>
            <consortium name="US DOE Joint Genome Institute"/>
            <person name="Copeland A."/>
            <person name="Lucas S."/>
            <person name="Lapidus A."/>
            <person name="Barry K."/>
            <person name="Detter J.C."/>
            <person name="Glavina T."/>
            <person name="Hammon N."/>
            <person name="Israni S."/>
            <person name="Pitluck S."/>
            <person name="Chain P."/>
            <person name="Malfatti S."/>
            <person name="Shin M."/>
            <person name="Vergez L."/>
            <person name="Schmutz J."/>
            <person name="Larimer F."/>
            <person name="Land M."/>
            <person name="Hauser L."/>
            <person name="Pelletier D.A."/>
            <person name="Kyrpides N."/>
            <person name="Anderson I."/>
            <person name="Oda Y."/>
            <person name="Harwood C.S."/>
            <person name="Richardson P."/>
        </authorList>
    </citation>
    <scope>NUCLEOTIDE SEQUENCE [LARGE SCALE GENOMIC DNA]</scope>
    <source>
        <strain>HaA2</strain>
    </source>
</reference>
<protein>
    <recommendedName>
        <fullName evidence="1">Tol-Pal system protein TolB</fullName>
    </recommendedName>
</protein>
<dbReference type="EMBL" id="CP000250">
    <property type="protein sequence ID" value="ABD06520.1"/>
    <property type="molecule type" value="Genomic_DNA"/>
</dbReference>
<dbReference type="RefSeq" id="WP_011440708.1">
    <property type="nucleotide sequence ID" value="NC_007778.1"/>
</dbReference>
<dbReference type="SMR" id="Q2IZ40"/>
<dbReference type="STRING" id="316058.RPB_1812"/>
<dbReference type="KEGG" id="rpb:RPB_1812"/>
<dbReference type="eggNOG" id="COG0823">
    <property type="taxonomic scope" value="Bacteria"/>
</dbReference>
<dbReference type="HOGENOM" id="CLU_047123_0_0_5"/>
<dbReference type="OrthoDB" id="9802240at2"/>
<dbReference type="Proteomes" id="UP000008809">
    <property type="component" value="Chromosome"/>
</dbReference>
<dbReference type="GO" id="GO:0042597">
    <property type="term" value="C:periplasmic space"/>
    <property type="evidence" value="ECO:0007669"/>
    <property type="project" value="UniProtKB-SubCell"/>
</dbReference>
<dbReference type="GO" id="GO:0051301">
    <property type="term" value="P:cell division"/>
    <property type="evidence" value="ECO:0007669"/>
    <property type="project" value="UniProtKB-UniRule"/>
</dbReference>
<dbReference type="GO" id="GO:0017038">
    <property type="term" value="P:protein import"/>
    <property type="evidence" value="ECO:0007669"/>
    <property type="project" value="InterPro"/>
</dbReference>
<dbReference type="Gene3D" id="2.120.10.30">
    <property type="entry name" value="TolB, C-terminal domain"/>
    <property type="match status" value="1"/>
</dbReference>
<dbReference type="Gene3D" id="3.40.50.10070">
    <property type="entry name" value="TolB, N-terminal domain"/>
    <property type="match status" value="1"/>
</dbReference>
<dbReference type="HAMAP" id="MF_00671">
    <property type="entry name" value="TolB"/>
    <property type="match status" value="1"/>
</dbReference>
<dbReference type="InterPro" id="IPR011042">
    <property type="entry name" value="6-blade_b-propeller_TolB-like"/>
</dbReference>
<dbReference type="InterPro" id="IPR011659">
    <property type="entry name" value="PD40"/>
</dbReference>
<dbReference type="InterPro" id="IPR006311">
    <property type="entry name" value="TAT_signal"/>
</dbReference>
<dbReference type="InterPro" id="IPR014167">
    <property type="entry name" value="Tol-Pal_TolB"/>
</dbReference>
<dbReference type="InterPro" id="IPR007195">
    <property type="entry name" value="TolB_N"/>
</dbReference>
<dbReference type="NCBIfam" id="TIGR02800">
    <property type="entry name" value="propeller_TolB"/>
    <property type="match status" value="1"/>
</dbReference>
<dbReference type="PANTHER" id="PTHR36842:SF1">
    <property type="entry name" value="PROTEIN TOLB"/>
    <property type="match status" value="1"/>
</dbReference>
<dbReference type="PANTHER" id="PTHR36842">
    <property type="entry name" value="PROTEIN TOLB HOMOLOG"/>
    <property type="match status" value="1"/>
</dbReference>
<dbReference type="Pfam" id="PF07676">
    <property type="entry name" value="PD40"/>
    <property type="match status" value="3"/>
</dbReference>
<dbReference type="Pfam" id="PF04052">
    <property type="entry name" value="TolB_N"/>
    <property type="match status" value="1"/>
</dbReference>
<dbReference type="SUPFAM" id="SSF52964">
    <property type="entry name" value="TolB, N-terminal domain"/>
    <property type="match status" value="1"/>
</dbReference>
<dbReference type="SUPFAM" id="SSF69304">
    <property type="entry name" value="Tricorn protease N-terminal domain"/>
    <property type="match status" value="1"/>
</dbReference>
<dbReference type="PROSITE" id="PS51318">
    <property type="entry name" value="TAT"/>
    <property type="match status" value="1"/>
</dbReference>
<gene>
    <name evidence="1" type="primary">tolB</name>
    <name type="ordered locus">RPB_1812</name>
</gene>
<proteinExistence type="inferred from homology"/>
<accession>Q2IZ40</accession>